<dbReference type="EC" id="5.1.1.7" evidence="1"/>
<dbReference type="EMBL" id="BA000043">
    <property type="protein sequence ID" value="BAD77242.1"/>
    <property type="molecule type" value="Genomic_DNA"/>
</dbReference>
<dbReference type="SMR" id="Q5KVP4"/>
<dbReference type="STRING" id="235909.GK2957"/>
<dbReference type="KEGG" id="gka:GK2957"/>
<dbReference type="eggNOG" id="COG0253">
    <property type="taxonomic scope" value="Bacteria"/>
</dbReference>
<dbReference type="HOGENOM" id="CLU_053306_3_0_9"/>
<dbReference type="UniPathway" id="UPA00034">
    <property type="reaction ID" value="UER00025"/>
</dbReference>
<dbReference type="Proteomes" id="UP000001172">
    <property type="component" value="Chromosome"/>
</dbReference>
<dbReference type="GO" id="GO:0005829">
    <property type="term" value="C:cytosol"/>
    <property type="evidence" value="ECO:0007669"/>
    <property type="project" value="TreeGrafter"/>
</dbReference>
<dbReference type="GO" id="GO:0008837">
    <property type="term" value="F:diaminopimelate epimerase activity"/>
    <property type="evidence" value="ECO:0007669"/>
    <property type="project" value="UniProtKB-UniRule"/>
</dbReference>
<dbReference type="GO" id="GO:0009089">
    <property type="term" value="P:lysine biosynthetic process via diaminopimelate"/>
    <property type="evidence" value="ECO:0007669"/>
    <property type="project" value="UniProtKB-UniRule"/>
</dbReference>
<dbReference type="FunFam" id="3.10.310.10:FF:000004">
    <property type="entry name" value="Diaminopimelate epimerase"/>
    <property type="match status" value="1"/>
</dbReference>
<dbReference type="FunFam" id="3.10.310.10:FF:000006">
    <property type="entry name" value="Diaminopimelate epimerase"/>
    <property type="match status" value="1"/>
</dbReference>
<dbReference type="Gene3D" id="3.10.310.10">
    <property type="entry name" value="Diaminopimelate Epimerase, Chain A, domain 1"/>
    <property type="match status" value="2"/>
</dbReference>
<dbReference type="HAMAP" id="MF_00197">
    <property type="entry name" value="DAP_epimerase"/>
    <property type="match status" value="1"/>
</dbReference>
<dbReference type="InterPro" id="IPR018510">
    <property type="entry name" value="DAP_epimerase_AS"/>
</dbReference>
<dbReference type="InterPro" id="IPR001653">
    <property type="entry name" value="DAP_epimerase_DapF"/>
</dbReference>
<dbReference type="NCBIfam" id="TIGR00652">
    <property type="entry name" value="DapF"/>
    <property type="match status" value="1"/>
</dbReference>
<dbReference type="PANTHER" id="PTHR31689:SF0">
    <property type="entry name" value="DIAMINOPIMELATE EPIMERASE"/>
    <property type="match status" value="1"/>
</dbReference>
<dbReference type="PANTHER" id="PTHR31689">
    <property type="entry name" value="DIAMINOPIMELATE EPIMERASE, CHLOROPLASTIC"/>
    <property type="match status" value="1"/>
</dbReference>
<dbReference type="Pfam" id="PF01678">
    <property type="entry name" value="DAP_epimerase"/>
    <property type="match status" value="2"/>
</dbReference>
<dbReference type="SUPFAM" id="SSF54506">
    <property type="entry name" value="Diaminopimelate epimerase-like"/>
    <property type="match status" value="1"/>
</dbReference>
<dbReference type="PROSITE" id="PS01326">
    <property type="entry name" value="DAP_EPIMERASE"/>
    <property type="match status" value="1"/>
</dbReference>
<name>DAPF_GEOKA</name>
<keyword id="KW-0028">Amino-acid biosynthesis</keyword>
<keyword id="KW-0963">Cytoplasm</keyword>
<keyword id="KW-0413">Isomerase</keyword>
<keyword id="KW-0457">Lysine biosynthesis</keyword>
<keyword id="KW-1185">Reference proteome</keyword>
<reference key="1">
    <citation type="journal article" date="2004" name="Nucleic Acids Res.">
        <title>Thermoadaptation trait revealed by the genome sequence of thermophilic Geobacillus kaustophilus.</title>
        <authorList>
            <person name="Takami H."/>
            <person name="Takaki Y."/>
            <person name="Chee G.-J."/>
            <person name="Nishi S."/>
            <person name="Shimamura S."/>
            <person name="Suzuki H."/>
            <person name="Matsui S."/>
            <person name="Uchiyama I."/>
        </authorList>
    </citation>
    <scope>NUCLEOTIDE SEQUENCE [LARGE SCALE GENOMIC DNA]</scope>
    <source>
        <strain>HTA426</strain>
    </source>
</reference>
<accession>Q5KVP4</accession>
<gene>
    <name evidence="1" type="primary">dapF</name>
    <name type="ordered locus">GK2957</name>
</gene>
<protein>
    <recommendedName>
        <fullName evidence="1">Diaminopimelate epimerase</fullName>
        <shortName evidence="1">DAP epimerase</shortName>
        <ecNumber evidence="1">5.1.1.7</ecNumber>
    </recommendedName>
    <alternativeName>
        <fullName evidence="1">PLP-independent amino acid racemase</fullName>
    </alternativeName>
</protein>
<feature type="chain" id="PRO_1000011880" description="Diaminopimelate epimerase">
    <location>
        <begin position="1"/>
        <end position="290"/>
    </location>
</feature>
<feature type="active site" description="Proton donor" evidence="1">
    <location>
        <position position="76"/>
    </location>
</feature>
<feature type="active site" description="Proton acceptor" evidence="1">
    <location>
        <position position="226"/>
    </location>
</feature>
<feature type="binding site" evidence="1">
    <location>
        <position position="14"/>
    </location>
    <ligand>
        <name>substrate</name>
    </ligand>
</feature>
<feature type="binding site" evidence="1">
    <location>
        <position position="67"/>
    </location>
    <ligand>
        <name>substrate</name>
    </ligand>
</feature>
<feature type="binding site" evidence="1">
    <location>
        <begin position="77"/>
        <end position="78"/>
    </location>
    <ligand>
        <name>substrate</name>
    </ligand>
</feature>
<feature type="binding site" evidence="1">
    <location>
        <position position="166"/>
    </location>
    <ligand>
        <name>substrate</name>
    </ligand>
</feature>
<feature type="binding site" evidence="1">
    <location>
        <position position="199"/>
    </location>
    <ligand>
        <name>substrate</name>
    </ligand>
</feature>
<feature type="binding site" evidence="1">
    <location>
        <begin position="217"/>
        <end position="218"/>
    </location>
    <ligand>
        <name>substrate</name>
    </ligand>
</feature>
<feature type="binding site" evidence="1">
    <location>
        <begin position="227"/>
        <end position="228"/>
    </location>
    <ligand>
        <name>substrate</name>
    </ligand>
</feature>
<feature type="site" description="Could be important to modulate the pK values of the two catalytic cysteine residues" evidence="1">
    <location>
        <position position="168"/>
    </location>
</feature>
<feature type="site" description="Could be important to modulate the pK values of the two catalytic cysteine residues" evidence="1">
    <location>
        <position position="217"/>
    </location>
</feature>
<organism>
    <name type="scientific">Geobacillus kaustophilus (strain HTA426)</name>
    <dbReference type="NCBI Taxonomy" id="235909"/>
    <lineage>
        <taxon>Bacteria</taxon>
        <taxon>Bacillati</taxon>
        <taxon>Bacillota</taxon>
        <taxon>Bacilli</taxon>
        <taxon>Bacillales</taxon>
        <taxon>Anoxybacillaceae</taxon>
        <taxon>Geobacillus</taxon>
        <taxon>Geobacillus thermoleovorans group</taxon>
    </lineage>
</organism>
<proteinExistence type="inferred from homology"/>
<sequence>MRSFSFTKMHGLGNSYIYVDLFRETLPEEELPAIARSVADVHTGIGSDGLILICPSEKAPVKMRIFNSDGSEGKNCGNGLRCVAKYAYEHGIVSDRTFLIETLSGLVEARVAVADGEVTSVTVDMGEPRLERSAIPMLGPEAERVVAEPFAIAGGEYEITAVSMGNPHVIFYVDDIQKAPVTTLGPLVEKDPRFPEGVNVEFVEVVNERELHFRVWERGSGVTQACGTGACAAVVASVLNGKTARGEETVVHLAGGDLTIVWGHDGRVRMTGPAETVCTGVYYYRGGRNG</sequence>
<comment type="function">
    <text evidence="1">Catalyzes the stereoinversion of LL-2,6-diaminopimelate (L,L-DAP) to meso-diaminopimelate (meso-DAP), a precursor of L-lysine and an essential component of the bacterial peptidoglycan.</text>
</comment>
<comment type="catalytic activity">
    <reaction evidence="1">
        <text>(2S,6S)-2,6-diaminopimelate = meso-2,6-diaminopimelate</text>
        <dbReference type="Rhea" id="RHEA:15393"/>
        <dbReference type="ChEBI" id="CHEBI:57609"/>
        <dbReference type="ChEBI" id="CHEBI:57791"/>
        <dbReference type="EC" id="5.1.1.7"/>
    </reaction>
</comment>
<comment type="pathway">
    <text evidence="1">Amino-acid biosynthesis; L-lysine biosynthesis via DAP pathway; DL-2,6-diaminopimelate from LL-2,6-diaminopimelate: step 1/1.</text>
</comment>
<comment type="subunit">
    <text evidence="1">Homodimer.</text>
</comment>
<comment type="subcellular location">
    <subcellularLocation>
        <location evidence="1">Cytoplasm</location>
    </subcellularLocation>
</comment>
<comment type="similarity">
    <text evidence="1">Belongs to the diaminopimelate epimerase family.</text>
</comment>
<evidence type="ECO:0000255" key="1">
    <source>
        <dbReference type="HAMAP-Rule" id="MF_00197"/>
    </source>
</evidence>